<reference key="1">
    <citation type="journal article" date="2005" name="Proc. Natl. Acad. Sci. U.S.A.">
        <title>Whole genome sequence of Staphylococcus saprophyticus reveals the pathogenesis of uncomplicated urinary tract infection.</title>
        <authorList>
            <person name="Kuroda M."/>
            <person name="Yamashita A."/>
            <person name="Hirakawa H."/>
            <person name="Kumano M."/>
            <person name="Morikawa K."/>
            <person name="Higashide M."/>
            <person name="Maruyama A."/>
            <person name="Inose Y."/>
            <person name="Matoba K."/>
            <person name="Toh H."/>
            <person name="Kuhara S."/>
            <person name="Hattori M."/>
            <person name="Ohta T."/>
        </authorList>
    </citation>
    <scope>NUCLEOTIDE SEQUENCE [LARGE SCALE GENOMIC DNA]</scope>
    <source>
        <strain>ATCC 15305 / DSM 20229 / NCIMB 8711 / NCTC 7292 / S-41</strain>
    </source>
</reference>
<sequence>MSTTKAVIPGSFDPITYGHIDIIDRSADRFDELHICVLKNSGKSGTFSIEERIALIEESVKHLNNVTVHHFNGLLVDFCDKIGAETIIRGLRAVSDFEYELRLTSMNKKLNSNVETMYMMTSTNYSFISSSVVKEVAAYKANVSDFVPVHVEKALNEKFKK</sequence>
<accession>Q49WP9</accession>
<proteinExistence type="inferred from homology"/>
<comment type="function">
    <text evidence="1">Reversibly transfers an adenylyl group from ATP to 4'-phosphopantetheine, yielding dephospho-CoA (dPCoA) and pyrophosphate.</text>
</comment>
<comment type="catalytic activity">
    <reaction evidence="1">
        <text>(R)-4'-phosphopantetheine + ATP + H(+) = 3'-dephospho-CoA + diphosphate</text>
        <dbReference type="Rhea" id="RHEA:19801"/>
        <dbReference type="ChEBI" id="CHEBI:15378"/>
        <dbReference type="ChEBI" id="CHEBI:30616"/>
        <dbReference type="ChEBI" id="CHEBI:33019"/>
        <dbReference type="ChEBI" id="CHEBI:57328"/>
        <dbReference type="ChEBI" id="CHEBI:61723"/>
        <dbReference type="EC" id="2.7.7.3"/>
    </reaction>
</comment>
<comment type="cofactor">
    <cofactor evidence="1">
        <name>Mg(2+)</name>
        <dbReference type="ChEBI" id="CHEBI:18420"/>
    </cofactor>
</comment>
<comment type="pathway">
    <text evidence="1">Cofactor biosynthesis; coenzyme A biosynthesis; CoA from (R)-pantothenate: step 4/5.</text>
</comment>
<comment type="subunit">
    <text evidence="1">Homohexamer.</text>
</comment>
<comment type="subcellular location">
    <subcellularLocation>
        <location evidence="1">Cytoplasm</location>
    </subcellularLocation>
</comment>
<comment type="similarity">
    <text evidence="1">Belongs to the bacterial CoaD family.</text>
</comment>
<gene>
    <name evidence="1" type="primary">coaD</name>
    <name type="ordered locus">SSP1663</name>
</gene>
<evidence type="ECO:0000255" key="1">
    <source>
        <dbReference type="HAMAP-Rule" id="MF_00151"/>
    </source>
</evidence>
<keyword id="KW-0067">ATP-binding</keyword>
<keyword id="KW-0173">Coenzyme A biosynthesis</keyword>
<keyword id="KW-0963">Cytoplasm</keyword>
<keyword id="KW-0460">Magnesium</keyword>
<keyword id="KW-0547">Nucleotide-binding</keyword>
<keyword id="KW-0548">Nucleotidyltransferase</keyword>
<keyword id="KW-1185">Reference proteome</keyword>
<keyword id="KW-0808">Transferase</keyword>
<protein>
    <recommendedName>
        <fullName evidence="1">Phosphopantetheine adenylyltransferase</fullName>
        <ecNumber evidence="1">2.7.7.3</ecNumber>
    </recommendedName>
    <alternativeName>
        <fullName evidence="1">Dephospho-CoA pyrophosphorylase</fullName>
    </alternativeName>
    <alternativeName>
        <fullName evidence="1">Pantetheine-phosphate adenylyltransferase</fullName>
        <shortName evidence="1">PPAT</shortName>
    </alternativeName>
</protein>
<name>COAD_STAS1</name>
<organism>
    <name type="scientific">Staphylococcus saprophyticus subsp. saprophyticus (strain ATCC 15305 / DSM 20229 / NCIMB 8711 / NCTC 7292 / S-41)</name>
    <dbReference type="NCBI Taxonomy" id="342451"/>
    <lineage>
        <taxon>Bacteria</taxon>
        <taxon>Bacillati</taxon>
        <taxon>Bacillota</taxon>
        <taxon>Bacilli</taxon>
        <taxon>Bacillales</taxon>
        <taxon>Staphylococcaceae</taxon>
        <taxon>Staphylococcus</taxon>
    </lineage>
</organism>
<feature type="chain" id="PRO_1000011248" description="Phosphopantetheine adenylyltransferase">
    <location>
        <begin position="1"/>
        <end position="161"/>
    </location>
</feature>
<feature type="binding site" evidence="1">
    <location>
        <begin position="11"/>
        <end position="12"/>
    </location>
    <ligand>
        <name>ATP</name>
        <dbReference type="ChEBI" id="CHEBI:30616"/>
    </ligand>
</feature>
<feature type="binding site" evidence="1">
    <location>
        <position position="11"/>
    </location>
    <ligand>
        <name>substrate</name>
    </ligand>
</feature>
<feature type="binding site" evidence="1">
    <location>
        <position position="19"/>
    </location>
    <ligand>
        <name>ATP</name>
        <dbReference type="ChEBI" id="CHEBI:30616"/>
    </ligand>
</feature>
<feature type="binding site" evidence="1">
    <location>
        <position position="43"/>
    </location>
    <ligand>
        <name>substrate</name>
    </ligand>
</feature>
<feature type="binding site" evidence="1">
    <location>
        <position position="75"/>
    </location>
    <ligand>
        <name>substrate</name>
    </ligand>
</feature>
<feature type="binding site" evidence="1">
    <location>
        <position position="89"/>
    </location>
    <ligand>
        <name>substrate</name>
    </ligand>
</feature>
<feature type="binding site" evidence="1">
    <location>
        <begin position="90"/>
        <end position="92"/>
    </location>
    <ligand>
        <name>ATP</name>
        <dbReference type="ChEBI" id="CHEBI:30616"/>
    </ligand>
</feature>
<feature type="binding site" evidence="1">
    <location>
        <position position="100"/>
    </location>
    <ligand>
        <name>ATP</name>
        <dbReference type="ChEBI" id="CHEBI:30616"/>
    </ligand>
</feature>
<feature type="binding site" evidence="1">
    <location>
        <begin position="125"/>
        <end position="131"/>
    </location>
    <ligand>
        <name>ATP</name>
        <dbReference type="ChEBI" id="CHEBI:30616"/>
    </ligand>
</feature>
<feature type="site" description="Transition state stabilizer" evidence="1">
    <location>
        <position position="19"/>
    </location>
</feature>
<dbReference type="EC" id="2.7.7.3" evidence="1"/>
<dbReference type="EMBL" id="AP008934">
    <property type="protein sequence ID" value="BAE18808.1"/>
    <property type="molecule type" value="Genomic_DNA"/>
</dbReference>
<dbReference type="RefSeq" id="WP_011303393.1">
    <property type="nucleotide sequence ID" value="NZ_MTGA01000039.1"/>
</dbReference>
<dbReference type="SMR" id="Q49WP9"/>
<dbReference type="GeneID" id="3615153"/>
<dbReference type="KEGG" id="ssp:SSP1663"/>
<dbReference type="PATRIC" id="fig|342451.11.peg.1662"/>
<dbReference type="eggNOG" id="COG0669">
    <property type="taxonomic scope" value="Bacteria"/>
</dbReference>
<dbReference type="HOGENOM" id="CLU_100149_0_1_9"/>
<dbReference type="OrthoDB" id="9806661at2"/>
<dbReference type="UniPathway" id="UPA00241">
    <property type="reaction ID" value="UER00355"/>
</dbReference>
<dbReference type="Proteomes" id="UP000006371">
    <property type="component" value="Chromosome"/>
</dbReference>
<dbReference type="GO" id="GO:0005737">
    <property type="term" value="C:cytoplasm"/>
    <property type="evidence" value="ECO:0007669"/>
    <property type="project" value="UniProtKB-SubCell"/>
</dbReference>
<dbReference type="GO" id="GO:0005524">
    <property type="term" value="F:ATP binding"/>
    <property type="evidence" value="ECO:0007669"/>
    <property type="project" value="UniProtKB-KW"/>
</dbReference>
<dbReference type="GO" id="GO:0004595">
    <property type="term" value="F:pantetheine-phosphate adenylyltransferase activity"/>
    <property type="evidence" value="ECO:0007669"/>
    <property type="project" value="UniProtKB-UniRule"/>
</dbReference>
<dbReference type="GO" id="GO:0015937">
    <property type="term" value="P:coenzyme A biosynthetic process"/>
    <property type="evidence" value="ECO:0007669"/>
    <property type="project" value="UniProtKB-UniRule"/>
</dbReference>
<dbReference type="CDD" id="cd02163">
    <property type="entry name" value="PPAT"/>
    <property type="match status" value="1"/>
</dbReference>
<dbReference type="Gene3D" id="3.40.50.620">
    <property type="entry name" value="HUPs"/>
    <property type="match status" value="1"/>
</dbReference>
<dbReference type="HAMAP" id="MF_00151">
    <property type="entry name" value="PPAT_bact"/>
    <property type="match status" value="1"/>
</dbReference>
<dbReference type="InterPro" id="IPR004821">
    <property type="entry name" value="Cyt_trans-like"/>
</dbReference>
<dbReference type="InterPro" id="IPR001980">
    <property type="entry name" value="PPAT"/>
</dbReference>
<dbReference type="InterPro" id="IPR014729">
    <property type="entry name" value="Rossmann-like_a/b/a_fold"/>
</dbReference>
<dbReference type="NCBIfam" id="TIGR01510">
    <property type="entry name" value="coaD_prev_kdtB"/>
    <property type="match status" value="1"/>
</dbReference>
<dbReference type="NCBIfam" id="TIGR00125">
    <property type="entry name" value="cyt_tran_rel"/>
    <property type="match status" value="1"/>
</dbReference>
<dbReference type="PANTHER" id="PTHR21342">
    <property type="entry name" value="PHOSPHOPANTETHEINE ADENYLYLTRANSFERASE"/>
    <property type="match status" value="1"/>
</dbReference>
<dbReference type="PANTHER" id="PTHR21342:SF1">
    <property type="entry name" value="PHOSPHOPANTETHEINE ADENYLYLTRANSFERASE"/>
    <property type="match status" value="1"/>
</dbReference>
<dbReference type="Pfam" id="PF01467">
    <property type="entry name" value="CTP_transf_like"/>
    <property type="match status" value="1"/>
</dbReference>
<dbReference type="PRINTS" id="PR01020">
    <property type="entry name" value="LPSBIOSNTHSS"/>
</dbReference>
<dbReference type="SUPFAM" id="SSF52374">
    <property type="entry name" value="Nucleotidylyl transferase"/>
    <property type="match status" value="1"/>
</dbReference>